<comment type="function">
    <text evidence="1">Plays a central role in chromosome condensation, segregation and cell cycle progression. Functions as a homodimer, which is essential for chromosome partition. Involved in negative DNA supercoiling in vivo, and by this means organize and compact chromosomes. May achieve or facilitate chromosome segregation by condensation DNA from both sides of a centrally located replisome during cell division.</text>
</comment>
<comment type="subunit">
    <text evidence="1">Homodimerization via its hinge domain. Binds to DNA via its C-terminal region. Interacts, and probably forms a ternary complex, with MukE and MukF via its C-terminal region. The complex formation is stimulated by calcium or magnesium. Interacts with tubulin-related protein FtsZ.</text>
</comment>
<comment type="subcellular location">
    <subcellularLocation>
        <location evidence="1">Cytoplasm</location>
        <location evidence="1">Nucleoid</location>
    </subcellularLocation>
    <text evidence="1">Restricted to the nucleoid region.</text>
</comment>
<comment type="domain">
    <text evidence="1">The hinge domain, which separates the large intramolecular coiled coil regions, allows the homodimerization, forming a V-shaped homodimer.</text>
</comment>
<comment type="similarity">
    <text evidence="1">Belongs to the SMC family. MukB subfamily.</text>
</comment>
<gene>
    <name evidence="1" type="primary">mukB</name>
    <name type="ordered locus">ECIAI39_2223</name>
</gene>
<evidence type="ECO:0000255" key="1">
    <source>
        <dbReference type="HAMAP-Rule" id="MF_01800"/>
    </source>
</evidence>
<sequence length="1486" mass="170205">MIERGKFRSLTLINWNGFFARTFDLDELVTTLSGGNGAGKSTTMAAFVTALIPDLTLLHFRNTTEAGATSGSRDKGLHGKLKAGVCYSMLDTINSRHQRVVVGVRLQQVAGRDRKVDIKPFAIQGLPMSVQPTQLVTETLSERQARVLPLNELKDKLEAMEGVQFKQFNSITDYHSLMFDLGIIARRLRSASDRSKFYRLIEASLYGGISSAITRSLRDYLLPENSGVRKAFQDMEAALRENRMTLEAIRVTQSDRDLFKHLISEATNYVAADYMRHANERRVHLDKALEFRRELHTSRQQLAAEQYKHVDMARELAEHNGAEGDLEADYQAASDHLNLVQTALRQQEKIERYEADLDELQIRLEEQNEVVAEAIERQEENEARAEAAELEVDELKSQLADYQQALDVQQTRAIQYNQAIAALNRAKELCHLPDLTADSAAEWLETFQAKELEATEKMLSLEQKMSMAQTAHSQFEQAYQLVVAINGPLARNEAWDVARELLREGVDQRHLAEQVQPLRMRLSELEQRLREQQEAERLLADFCKRQGKNFDIDELEALHQELEARIASLSDSVSNAREERMTLRQEQEQLQSRIQSLMRRAPVWLAAQNSLNQLSEQCGEEFSSSQDVTEYLQQLLEREREAIVERDEVGARKNAVDEEIERLSQPGGSEDQRLNALAERFGGVLLSEIYDDVSLEDAPYFSALYGPSRHAIVVPDLSQVTEHLEGLTDCPEDLYLIEGDPQSFDDSVFSVDELEKAVVVKIADRQWRYSRFPEVPLFGRAARESRIESLHAEREVLSERFATLSFDVQKTQRLHQAFSRFIGSHLAVAFESDPEAEIRQLNSRRVELERALSNHENDNQQQRIQFEQAKEGVTALNRILPRLNLLADDSLADRVDEIRERLDEAQEAARFVQQFGNQLAKLEPIVSVLQSDPEQFEQLKEDYAYSQQMQRDARQQAFALTEVVQRRAHFSYSDSAEMLSGNSDLNEKLRERLEQAEAERTRAREALRGHAAQLSQYNQVLASLKSSYDTKKELLNDLQRELQDIGVRADSGAEERARIRRDELHAQLSNNRSRRNQLEKALTFCEAEMDNLTRKLRKLERDYFEMREQVVTAKAGWCAVMRMVKDNGVERRLHRRELAYLSADDLRSMSDKALGALRLAVADNEHLRDVLRMSEDPKRPERKIQFFVAVYQHLRERIRQDIIRTDDPVEAIEQMEIELSRLTEELTSREQKLAISSRSVANIIRKTIQREQNRIRMLNQGLQSVSFGQVNSVRLNVNVRETHAMLLDVLSEQHEQHQDLFNSNRLTFSEALAKLYQRLNPQIDMGQRTPQTIGEELLDYRNYLEMEVEVNRGSDGWLRAESGALSTGEAIGTGMSILVMVVQSWEDESRRLRGKDISPCRLLFLDEAARLDARSIATLFELCERLQMQLIIAAPENISPEKGTTYKLVRKVFQNTEHVHVVGLRGFAPQLPETLPGTDEAPSQAS</sequence>
<name>MUKB_ECO7I</name>
<organism>
    <name type="scientific">Escherichia coli O7:K1 (strain IAI39 / ExPEC)</name>
    <dbReference type="NCBI Taxonomy" id="585057"/>
    <lineage>
        <taxon>Bacteria</taxon>
        <taxon>Pseudomonadati</taxon>
        <taxon>Pseudomonadota</taxon>
        <taxon>Gammaproteobacteria</taxon>
        <taxon>Enterobacterales</taxon>
        <taxon>Enterobacteriaceae</taxon>
        <taxon>Escherichia</taxon>
    </lineage>
</organism>
<proteinExistence type="inferred from homology"/>
<protein>
    <recommendedName>
        <fullName evidence="1">Chromosome partition protein MukB</fullName>
    </recommendedName>
    <alternativeName>
        <fullName evidence="1">Structural maintenance of chromosome-related protein</fullName>
    </alternativeName>
</protein>
<keyword id="KW-0067">ATP-binding</keyword>
<keyword id="KW-0131">Cell cycle</keyword>
<keyword id="KW-0132">Cell division</keyword>
<keyword id="KW-0159">Chromosome partition</keyword>
<keyword id="KW-0175">Coiled coil</keyword>
<keyword id="KW-0963">Cytoplasm</keyword>
<keyword id="KW-0226">DNA condensation</keyword>
<keyword id="KW-0238">DNA-binding</keyword>
<keyword id="KW-0547">Nucleotide-binding</keyword>
<accession>B7NM50</accession>
<feature type="chain" id="PRO_1000187470" description="Chromosome partition protein MukB">
    <location>
        <begin position="1"/>
        <end position="1486"/>
    </location>
</feature>
<feature type="region of interest" description="Flexible hinge" evidence="1">
    <location>
        <begin position="666"/>
        <end position="783"/>
    </location>
</feature>
<feature type="coiled-coil region" evidence="1">
    <location>
        <begin position="326"/>
        <end position="418"/>
    </location>
</feature>
<feature type="coiled-coil region" evidence="1">
    <location>
        <begin position="444"/>
        <end position="480"/>
    </location>
</feature>
<feature type="coiled-coil region" evidence="1">
    <location>
        <begin position="509"/>
        <end position="603"/>
    </location>
</feature>
<feature type="coiled-coil region" evidence="1">
    <location>
        <begin position="835"/>
        <end position="923"/>
    </location>
</feature>
<feature type="coiled-coil region" evidence="1">
    <location>
        <begin position="977"/>
        <end position="1115"/>
    </location>
</feature>
<feature type="coiled-coil region" evidence="1">
    <location>
        <begin position="1209"/>
        <end position="1265"/>
    </location>
</feature>
<feature type="binding site" evidence="1">
    <location>
        <begin position="34"/>
        <end position="41"/>
    </location>
    <ligand>
        <name>ATP</name>
        <dbReference type="ChEBI" id="CHEBI:30616"/>
    </ligand>
</feature>
<dbReference type="EMBL" id="CU928164">
    <property type="protein sequence ID" value="CAR18350.1"/>
    <property type="molecule type" value="Genomic_DNA"/>
</dbReference>
<dbReference type="RefSeq" id="WP_000572763.1">
    <property type="nucleotide sequence ID" value="NC_011750.1"/>
</dbReference>
<dbReference type="RefSeq" id="YP_002408186.1">
    <property type="nucleotide sequence ID" value="NC_011750.1"/>
</dbReference>
<dbReference type="SMR" id="B7NM50"/>
<dbReference type="STRING" id="585057.ECIAI39_2223"/>
<dbReference type="KEGG" id="ect:ECIAI39_2223"/>
<dbReference type="PATRIC" id="fig|585057.6.peg.2316"/>
<dbReference type="HOGENOM" id="CLU_004430_0_0_6"/>
<dbReference type="Proteomes" id="UP000000749">
    <property type="component" value="Chromosome"/>
</dbReference>
<dbReference type="GO" id="GO:0005737">
    <property type="term" value="C:cytoplasm"/>
    <property type="evidence" value="ECO:0007669"/>
    <property type="project" value="UniProtKB-UniRule"/>
</dbReference>
<dbReference type="GO" id="GO:0009295">
    <property type="term" value="C:nucleoid"/>
    <property type="evidence" value="ECO:0007669"/>
    <property type="project" value="UniProtKB-SubCell"/>
</dbReference>
<dbReference type="GO" id="GO:0005524">
    <property type="term" value="F:ATP binding"/>
    <property type="evidence" value="ECO:0007669"/>
    <property type="project" value="UniProtKB-UniRule"/>
</dbReference>
<dbReference type="GO" id="GO:0003677">
    <property type="term" value="F:DNA binding"/>
    <property type="evidence" value="ECO:0007669"/>
    <property type="project" value="UniProtKB-UniRule"/>
</dbReference>
<dbReference type="GO" id="GO:0051301">
    <property type="term" value="P:cell division"/>
    <property type="evidence" value="ECO:0007669"/>
    <property type="project" value="UniProtKB-KW"/>
</dbReference>
<dbReference type="GO" id="GO:0030261">
    <property type="term" value="P:chromosome condensation"/>
    <property type="evidence" value="ECO:0007669"/>
    <property type="project" value="UniProtKB-KW"/>
</dbReference>
<dbReference type="GO" id="GO:0007059">
    <property type="term" value="P:chromosome segregation"/>
    <property type="evidence" value="ECO:0007669"/>
    <property type="project" value="UniProtKB-UniRule"/>
</dbReference>
<dbReference type="GO" id="GO:0006260">
    <property type="term" value="P:DNA replication"/>
    <property type="evidence" value="ECO:0007669"/>
    <property type="project" value="UniProtKB-UniRule"/>
</dbReference>
<dbReference type="FunFam" id="3.30.70.3500:FF:000001">
    <property type="entry name" value="Chromosome partition protein MukB"/>
    <property type="match status" value="1"/>
</dbReference>
<dbReference type="FunFam" id="3.40.1140.10:FF:000001">
    <property type="entry name" value="Chromosome partition protein MukB"/>
    <property type="match status" value="1"/>
</dbReference>
<dbReference type="FunFam" id="3.40.1140.10:FF:000002">
    <property type="entry name" value="Chromosome partition protein MukB"/>
    <property type="match status" value="1"/>
</dbReference>
<dbReference type="Gene3D" id="1.20.58.850">
    <property type="match status" value="1"/>
</dbReference>
<dbReference type="Gene3D" id="3.40.1140.10">
    <property type="match status" value="2"/>
</dbReference>
<dbReference type="Gene3D" id="1.20.5.420">
    <property type="entry name" value="Immunoglobulin FC, subunit C"/>
    <property type="match status" value="1"/>
</dbReference>
<dbReference type="Gene3D" id="3.30.70.3500">
    <property type="entry name" value="MukB, hinge domain"/>
    <property type="match status" value="1"/>
</dbReference>
<dbReference type="HAMAP" id="MF_01800">
    <property type="entry name" value="MukB"/>
    <property type="match status" value="1"/>
</dbReference>
<dbReference type="InterPro" id="IPR012090">
    <property type="entry name" value="MukB"/>
</dbReference>
<dbReference type="InterPro" id="IPR050308">
    <property type="entry name" value="MukB/SMC"/>
</dbReference>
<dbReference type="InterPro" id="IPR032520">
    <property type="entry name" value="MukB_hinge"/>
</dbReference>
<dbReference type="InterPro" id="IPR042501">
    <property type="entry name" value="MukB_hinge_sf"/>
</dbReference>
<dbReference type="InterPro" id="IPR007406">
    <property type="entry name" value="MukB_N_dom"/>
</dbReference>
<dbReference type="InterPro" id="IPR027417">
    <property type="entry name" value="P-loop_NTPase"/>
</dbReference>
<dbReference type="NCBIfam" id="NF003422">
    <property type="entry name" value="PRK04863.1"/>
    <property type="match status" value="1"/>
</dbReference>
<dbReference type="PANTHER" id="PTHR42963">
    <property type="entry name" value="CHROMOSOME PARTITION PROTEIN MUKB"/>
    <property type="match status" value="1"/>
</dbReference>
<dbReference type="PANTHER" id="PTHR42963:SF1">
    <property type="entry name" value="DUF4476 DOMAIN-CONTAINING PROTEIN"/>
    <property type="match status" value="1"/>
</dbReference>
<dbReference type="Pfam" id="PF04310">
    <property type="entry name" value="MukB"/>
    <property type="match status" value="1"/>
</dbReference>
<dbReference type="Pfam" id="PF16330">
    <property type="entry name" value="MukB_hinge"/>
    <property type="match status" value="1"/>
</dbReference>
<dbReference type="Pfam" id="PF13558">
    <property type="entry name" value="SbcC_Walker_B"/>
    <property type="match status" value="1"/>
</dbReference>
<dbReference type="PIRSF" id="PIRSF005246">
    <property type="entry name" value="MukB"/>
    <property type="match status" value="1"/>
</dbReference>
<dbReference type="SUPFAM" id="SSF52540">
    <property type="entry name" value="P-loop containing nucleoside triphosphate hydrolases"/>
    <property type="match status" value="2"/>
</dbReference>
<reference key="1">
    <citation type="journal article" date="2009" name="PLoS Genet.">
        <title>Organised genome dynamics in the Escherichia coli species results in highly diverse adaptive paths.</title>
        <authorList>
            <person name="Touchon M."/>
            <person name="Hoede C."/>
            <person name="Tenaillon O."/>
            <person name="Barbe V."/>
            <person name="Baeriswyl S."/>
            <person name="Bidet P."/>
            <person name="Bingen E."/>
            <person name="Bonacorsi S."/>
            <person name="Bouchier C."/>
            <person name="Bouvet O."/>
            <person name="Calteau A."/>
            <person name="Chiapello H."/>
            <person name="Clermont O."/>
            <person name="Cruveiller S."/>
            <person name="Danchin A."/>
            <person name="Diard M."/>
            <person name="Dossat C."/>
            <person name="Karoui M.E."/>
            <person name="Frapy E."/>
            <person name="Garry L."/>
            <person name="Ghigo J.M."/>
            <person name="Gilles A.M."/>
            <person name="Johnson J."/>
            <person name="Le Bouguenec C."/>
            <person name="Lescat M."/>
            <person name="Mangenot S."/>
            <person name="Martinez-Jehanne V."/>
            <person name="Matic I."/>
            <person name="Nassif X."/>
            <person name="Oztas S."/>
            <person name="Petit M.A."/>
            <person name="Pichon C."/>
            <person name="Rouy Z."/>
            <person name="Ruf C.S."/>
            <person name="Schneider D."/>
            <person name="Tourret J."/>
            <person name="Vacherie B."/>
            <person name="Vallenet D."/>
            <person name="Medigue C."/>
            <person name="Rocha E.P.C."/>
            <person name="Denamur E."/>
        </authorList>
    </citation>
    <scope>NUCLEOTIDE SEQUENCE [LARGE SCALE GENOMIC DNA]</scope>
    <source>
        <strain>IAI39 / ExPEC</strain>
    </source>
</reference>